<organism>
    <name type="scientific">Prochlorococcus marinus (strain MIT 9313)</name>
    <dbReference type="NCBI Taxonomy" id="74547"/>
    <lineage>
        <taxon>Bacteria</taxon>
        <taxon>Bacillati</taxon>
        <taxon>Cyanobacteriota</taxon>
        <taxon>Cyanophyceae</taxon>
        <taxon>Synechococcales</taxon>
        <taxon>Prochlorococcaceae</taxon>
        <taxon>Prochlorococcus</taxon>
    </lineage>
</organism>
<feature type="chain" id="PRO_0000155885" description="Ribonuclease Z">
    <location>
        <begin position="1"/>
        <end position="318"/>
    </location>
</feature>
<feature type="active site" description="Proton acceptor" evidence="1">
    <location>
        <position position="66"/>
    </location>
</feature>
<feature type="binding site" evidence="1">
    <location>
        <position position="62"/>
    </location>
    <ligand>
        <name>Zn(2+)</name>
        <dbReference type="ChEBI" id="CHEBI:29105"/>
        <label>1</label>
        <note>catalytic</note>
    </ligand>
</feature>
<feature type="binding site" evidence="1">
    <location>
        <position position="64"/>
    </location>
    <ligand>
        <name>Zn(2+)</name>
        <dbReference type="ChEBI" id="CHEBI:29105"/>
        <label>1</label>
        <note>catalytic</note>
    </ligand>
</feature>
<feature type="binding site" evidence="1">
    <location>
        <position position="66"/>
    </location>
    <ligand>
        <name>Zn(2+)</name>
        <dbReference type="ChEBI" id="CHEBI:29105"/>
        <label>2</label>
        <note>catalytic</note>
    </ligand>
</feature>
<feature type="binding site" evidence="1">
    <location>
        <position position="67"/>
    </location>
    <ligand>
        <name>Zn(2+)</name>
        <dbReference type="ChEBI" id="CHEBI:29105"/>
        <label>2</label>
        <note>catalytic</note>
    </ligand>
</feature>
<feature type="binding site" evidence="1">
    <location>
        <position position="144"/>
    </location>
    <ligand>
        <name>Zn(2+)</name>
        <dbReference type="ChEBI" id="CHEBI:29105"/>
        <label>1</label>
        <note>catalytic</note>
    </ligand>
</feature>
<feature type="binding site" evidence="1">
    <location>
        <position position="215"/>
    </location>
    <ligand>
        <name>Zn(2+)</name>
        <dbReference type="ChEBI" id="CHEBI:29105"/>
        <label>1</label>
        <note>catalytic</note>
    </ligand>
</feature>
<feature type="binding site" evidence="1">
    <location>
        <position position="215"/>
    </location>
    <ligand>
        <name>Zn(2+)</name>
        <dbReference type="ChEBI" id="CHEBI:29105"/>
        <label>2</label>
        <note>catalytic</note>
    </ligand>
</feature>
<feature type="binding site" evidence="1">
    <location>
        <position position="273"/>
    </location>
    <ligand>
        <name>Zn(2+)</name>
        <dbReference type="ChEBI" id="CHEBI:29105"/>
        <label>2</label>
        <note>catalytic</note>
    </ligand>
</feature>
<sequence>MQVTFLGTSSGVPTRARNVSAVALRLPQRAELWLFDCGEGTQHQFLRSDLRLSQLRRVFVSHMHGDHVFGLPGLLASLGLSGNSNGVDLYGPDPLESYLQGVLRNSSTRIGYPLKVHRVRDAAEQNLIVFEDKDILVRCTPLTHRVPAYAYRVEQKPKPGHFNLERAQSLGIPPGPVYAALKRGEQVSLDDGRVVDGRDFCGPDRPGASIVFCTDTVFSEAAVSLAAGADLLIHEATFAHSEAEMAYQKQHSTSTMAAQTAAEAGVGKLVLTHLSPRYAPGNPVTPNDLLREAQAIFSNTILAKDFLSFEVAPRCNSS</sequence>
<accession>Q7V5W1</accession>
<proteinExistence type="inferred from homology"/>
<comment type="function">
    <text evidence="1">Zinc phosphodiesterase, which displays some tRNA 3'-processing endonuclease activity. Probably involved in tRNA maturation, by removing a 3'-trailer from precursor tRNA.</text>
</comment>
<comment type="catalytic activity">
    <reaction evidence="1">
        <text>Endonucleolytic cleavage of RNA, removing extra 3' nucleotides from tRNA precursor, generating 3' termini of tRNAs. A 3'-hydroxy group is left at the tRNA terminus and a 5'-phosphoryl group is left at the trailer molecule.</text>
        <dbReference type="EC" id="3.1.26.11"/>
    </reaction>
</comment>
<comment type="cofactor">
    <cofactor evidence="1">
        <name>Zn(2+)</name>
        <dbReference type="ChEBI" id="CHEBI:29105"/>
    </cofactor>
    <text evidence="1">Binds 2 Zn(2+) ions.</text>
</comment>
<comment type="subunit">
    <text evidence="1">Homodimer.</text>
</comment>
<comment type="similarity">
    <text evidence="1">Belongs to the RNase Z family.</text>
</comment>
<comment type="sequence caution" evidence="2">
    <conflict type="erroneous initiation">
        <sequence resource="EMBL-CDS" id="CAE21601"/>
    </conflict>
    <text>Extended N-terminus.</text>
</comment>
<reference key="1">
    <citation type="journal article" date="2003" name="Nature">
        <title>Genome divergence in two Prochlorococcus ecotypes reflects oceanic niche differentiation.</title>
        <authorList>
            <person name="Rocap G."/>
            <person name="Larimer F.W."/>
            <person name="Lamerdin J.E."/>
            <person name="Malfatti S."/>
            <person name="Chain P."/>
            <person name="Ahlgren N.A."/>
            <person name="Arellano A."/>
            <person name="Coleman M."/>
            <person name="Hauser L."/>
            <person name="Hess W.R."/>
            <person name="Johnson Z.I."/>
            <person name="Land M.L."/>
            <person name="Lindell D."/>
            <person name="Post A.F."/>
            <person name="Regala W."/>
            <person name="Shah M."/>
            <person name="Shaw S.L."/>
            <person name="Steglich C."/>
            <person name="Sullivan M.B."/>
            <person name="Ting C.S."/>
            <person name="Tolonen A."/>
            <person name="Webb E.A."/>
            <person name="Zinser E.R."/>
            <person name="Chisholm S.W."/>
        </authorList>
    </citation>
    <scope>NUCLEOTIDE SEQUENCE [LARGE SCALE GENOMIC DNA]</scope>
    <source>
        <strain>MIT 9313</strain>
    </source>
</reference>
<dbReference type="EC" id="3.1.26.11" evidence="1"/>
<dbReference type="EMBL" id="BX548175">
    <property type="protein sequence ID" value="CAE21601.1"/>
    <property type="status" value="ALT_INIT"/>
    <property type="molecule type" value="Genomic_DNA"/>
</dbReference>
<dbReference type="RefSeq" id="WP_041385149.1">
    <property type="nucleotide sequence ID" value="NC_005071.1"/>
</dbReference>
<dbReference type="SMR" id="Q7V5W1"/>
<dbReference type="KEGG" id="pmt:PMT_1426"/>
<dbReference type="eggNOG" id="COG1234">
    <property type="taxonomic scope" value="Bacteria"/>
</dbReference>
<dbReference type="HOGENOM" id="CLU_031317_2_0_3"/>
<dbReference type="OrthoDB" id="9800940at2"/>
<dbReference type="Proteomes" id="UP000001423">
    <property type="component" value="Chromosome"/>
</dbReference>
<dbReference type="GO" id="GO:0042781">
    <property type="term" value="F:3'-tRNA processing endoribonuclease activity"/>
    <property type="evidence" value="ECO:0007669"/>
    <property type="project" value="UniProtKB-UniRule"/>
</dbReference>
<dbReference type="GO" id="GO:0008270">
    <property type="term" value="F:zinc ion binding"/>
    <property type="evidence" value="ECO:0007669"/>
    <property type="project" value="UniProtKB-UniRule"/>
</dbReference>
<dbReference type="CDD" id="cd07717">
    <property type="entry name" value="RNaseZ_ZiPD-like_MBL-fold"/>
    <property type="match status" value="1"/>
</dbReference>
<dbReference type="FunFam" id="3.60.15.10:FF:000002">
    <property type="entry name" value="Ribonuclease Z"/>
    <property type="match status" value="1"/>
</dbReference>
<dbReference type="Gene3D" id="3.60.15.10">
    <property type="entry name" value="Ribonuclease Z/Hydroxyacylglutathione hydrolase-like"/>
    <property type="match status" value="1"/>
</dbReference>
<dbReference type="HAMAP" id="MF_01818">
    <property type="entry name" value="RNase_Z_BN"/>
    <property type="match status" value="1"/>
</dbReference>
<dbReference type="InterPro" id="IPR001279">
    <property type="entry name" value="Metallo-B-lactamas"/>
</dbReference>
<dbReference type="InterPro" id="IPR036866">
    <property type="entry name" value="RibonucZ/Hydroxyglut_hydro"/>
</dbReference>
<dbReference type="InterPro" id="IPR013471">
    <property type="entry name" value="RNase_Z/BN"/>
</dbReference>
<dbReference type="NCBIfam" id="NF000801">
    <property type="entry name" value="PRK00055.1-3"/>
    <property type="match status" value="1"/>
</dbReference>
<dbReference type="NCBIfam" id="TIGR02651">
    <property type="entry name" value="RNase_Z"/>
    <property type="match status" value="1"/>
</dbReference>
<dbReference type="PANTHER" id="PTHR46018">
    <property type="entry name" value="ZINC PHOSPHODIESTERASE ELAC PROTEIN 1"/>
    <property type="match status" value="1"/>
</dbReference>
<dbReference type="PANTHER" id="PTHR46018:SF2">
    <property type="entry name" value="ZINC PHOSPHODIESTERASE ELAC PROTEIN 1"/>
    <property type="match status" value="1"/>
</dbReference>
<dbReference type="Pfam" id="PF12706">
    <property type="entry name" value="Lactamase_B_2"/>
    <property type="match status" value="1"/>
</dbReference>
<dbReference type="SUPFAM" id="SSF56281">
    <property type="entry name" value="Metallo-hydrolase/oxidoreductase"/>
    <property type="match status" value="1"/>
</dbReference>
<name>RNZ_PROMM</name>
<evidence type="ECO:0000255" key="1">
    <source>
        <dbReference type="HAMAP-Rule" id="MF_01818"/>
    </source>
</evidence>
<evidence type="ECO:0000305" key="2"/>
<protein>
    <recommendedName>
        <fullName evidence="1">Ribonuclease Z</fullName>
        <shortName evidence="1">RNase Z</shortName>
        <ecNumber evidence="1">3.1.26.11</ecNumber>
    </recommendedName>
    <alternativeName>
        <fullName evidence="1">tRNA 3 endonuclease</fullName>
    </alternativeName>
    <alternativeName>
        <fullName evidence="1">tRNase Z</fullName>
    </alternativeName>
</protein>
<gene>
    <name evidence="1" type="primary">rnz</name>
    <name type="ordered locus">PMT_1426</name>
</gene>
<keyword id="KW-0255">Endonuclease</keyword>
<keyword id="KW-0378">Hydrolase</keyword>
<keyword id="KW-0479">Metal-binding</keyword>
<keyword id="KW-0540">Nuclease</keyword>
<keyword id="KW-1185">Reference proteome</keyword>
<keyword id="KW-0819">tRNA processing</keyword>
<keyword id="KW-0862">Zinc</keyword>